<feature type="chain" id="PRO_1000047411" description="Glycine--tRNA ligase alpha subunit">
    <location>
        <begin position="1"/>
        <end position="303"/>
    </location>
</feature>
<sequence length="303" mass="34716">MQKFDTRTFQGLILTLQDYWARQGCTIVQPLDMEVGAGTSHPMTCLRALGPEPMAAAYVQPSRRPTDGRYGENPNRLQHYYQFQVVIKPSPDNIQELYLGSLKELGMDPTIHDIRFVEDNWENPTLGAWGLGWEVWLNGMEVTQFTYFQQVGGLECKPVTGEITYGLERLAMYIQGVDSVYDLVWSDGPLGKTTYGDVFHQNEVEQSTYNFEYADVDFLFTCFEQYEKEAQQLLALENPLPLPAYERILKAAHSFNLLDARKAISVTERQRYILRIRTLTKAVAEAYYASREALGFPMCNKDK</sequence>
<keyword id="KW-0030">Aminoacyl-tRNA synthetase</keyword>
<keyword id="KW-0067">ATP-binding</keyword>
<keyword id="KW-0963">Cytoplasm</keyword>
<keyword id="KW-0436">Ligase</keyword>
<keyword id="KW-0547">Nucleotide-binding</keyword>
<keyword id="KW-0648">Protein biosynthesis</keyword>
<keyword id="KW-1185">Reference proteome</keyword>
<accession>A8ARE6</accession>
<name>SYGA_CITK8</name>
<reference key="1">
    <citation type="submission" date="2007-08" db="EMBL/GenBank/DDBJ databases">
        <authorList>
            <consortium name="The Citrobacter koseri Genome Sequencing Project"/>
            <person name="McClelland M."/>
            <person name="Sanderson E.K."/>
            <person name="Porwollik S."/>
            <person name="Spieth J."/>
            <person name="Clifton W.S."/>
            <person name="Latreille P."/>
            <person name="Courtney L."/>
            <person name="Wang C."/>
            <person name="Pepin K."/>
            <person name="Bhonagiri V."/>
            <person name="Nash W."/>
            <person name="Johnson M."/>
            <person name="Thiruvilangam P."/>
            <person name="Wilson R."/>
        </authorList>
    </citation>
    <scope>NUCLEOTIDE SEQUENCE [LARGE SCALE GENOMIC DNA]</scope>
    <source>
        <strain>ATCC BAA-895 / CDC 4225-83 / SGSC4696</strain>
    </source>
</reference>
<protein>
    <recommendedName>
        <fullName evidence="1">Glycine--tRNA ligase alpha subunit</fullName>
        <ecNumber evidence="1">6.1.1.14</ecNumber>
    </recommendedName>
    <alternativeName>
        <fullName evidence="1">Glycyl-tRNA synthetase alpha subunit</fullName>
        <shortName evidence="1">GlyRS</shortName>
    </alternativeName>
</protein>
<gene>
    <name evidence="1" type="primary">glyQ</name>
    <name type="ordered locus">CKO_05016</name>
</gene>
<comment type="catalytic activity">
    <reaction evidence="1">
        <text>tRNA(Gly) + glycine + ATP = glycyl-tRNA(Gly) + AMP + diphosphate</text>
        <dbReference type="Rhea" id="RHEA:16013"/>
        <dbReference type="Rhea" id="RHEA-COMP:9664"/>
        <dbReference type="Rhea" id="RHEA-COMP:9683"/>
        <dbReference type="ChEBI" id="CHEBI:30616"/>
        <dbReference type="ChEBI" id="CHEBI:33019"/>
        <dbReference type="ChEBI" id="CHEBI:57305"/>
        <dbReference type="ChEBI" id="CHEBI:78442"/>
        <dbReference type="ChEBI" id="CHEBI:78522"/>
        <dbReference type="ChEBI" id="CHEBI:456215"/>
        <dbReference type="EC" id="6.1.1.14"/>
    </reaction>
</comment>
<comment type="subunit">
    <text evidence="1">Tetramer of two alpha and two beta subunits.</text>
</comment>
<comment type="subcellular location">
    <subcellularLocation>
        <location evidence="1">Cytoplasm</location>
    </subcellularLocation>
</comment>
<comment type="similarity">
    <text evidence="1">Belongs to the class-II aminoacyl-tRNA synthetase family.</text>
</comment>
<evidence type="ECO:0000255" key="1">
    <source>
        <dbReference type="HAMAP-Rule" id="MF_00254"/>
    </source>
</evidence>
<dbReference type="EC" id="6.1.1.14" evidence="1"/>
<dbReference type="EMBL" id="CP000822">
    <property type="protein sequence ID" value="ABV16059.1"/>
    <property type="molecule type" value="Genomic_DNA"/>
</dbReference>
<dbReference type="RefSeq" id="WP_001168544.1">
    <property type="nucleotide sequence ID" value="NC_009792.1"/>
</dbReference>
<dbReference type="SMR" id="A8ARE6"/>
<dbReference type="STRING" id="290338.CKO_05016"/>
<dbReference type="GeneID" id="93778290"/>
<dbReference type="KEGG" id="cko:CKO_05016"/>
<dbReference type="HOGENOM" id="CLU_057066_1_0_6"/>
<dbReference type="OrthoDB" id="9802183at2"/>
<dbReference type="Proteomes" id="UP000008148">
    <property type="component" value="Chromosome"/>
</dbReference>
<dbReference type="GO" id="GO:0005829">
    <property type="term" value="C:cytosol"/>
    <property type="evidence" value="ECO:0007669"/>
    <property type="project" value="TreeGrafter"/>
</dbReference>
<dbReference type="GO" id="GO:0005524">
    <property type="term" value="F:ATP binding"/>
    <property type="evidence" value="ECO:0007669"/>
    <property type="project" value="UniProtKB-UniRule"/>
</dbReference>
<dbReference type="GO" id="GO:0004820">
    <property type="term" value="F:glycine-tRNA ligase activity"/>
    <property type="evidence" value="ECO:0007669"/>
    <property type="project" value="UniProtKB-UniRule"/>
</dbReference>
<dbReference type="GO" id="GO:0006426">
    <property type="term" value="P:glycyl-tRNA aminoacylation"/>
    <property type="evidence" value="ECO:0007669"/>
    <property type="project" value="UniProtKB-UniRule"/>
</dbReference>
<dbReference type="CDD" id="cd00733">
    <property type="entry name" value="GlyRS_alpha_core"/>
    <property type="match status" value="1"/>
</dbReference>
<dbReference type="FunFam" id="1.20.58.180:FF:000001">
    <property type="entry name" value="Glycine--tRNA ligase alpha subunit"/>
    <property type="match status" value="1"/>
</dbReference>
<dbReference type="FunFam" id="3.30.930.10:FF:000006">
    <property type="entry name" value="Glycine--tRNA ligase alpha subunit"/>
    <property type="match status" value="1"/>
</dbReference>
<dbReference type="Gene3D" id="3.30.930.10">
    <property type="entry name" value="Bira Bifunctional Protein, Domain 2"/>
    <property type="match status" value="1"/>
</dbReference>
<dbReference type="Gene3D" id="1.20.58.180">
    <property type="entry name" value="Class II aaRS and biotin synthetases, domain 2"/>
    <property type="match status" value="1"/>
</dbReference>
<dbReference type="HAMAP" id="MF_00254">
    <property type="entry name" value="Gly_tRNA_synth_alpha"/>
    <property type="match status" value="1"/>
</dbReference>
<dbReference type="InterPro" id="IPR045864">
    <property type="entry name" value="aa-tRNA-synth_II/BPL/LPL"/>
</dbReference>
<dbReference type="InterPro" id="IPR006194">
    <property type="entry name" value="Gly-tRNA-synth_heterodimer"/>
</dbReference>
<dbReference type="InterPro" id="IPR002310">
    <property type="entry name" value="Gly-tRNA_ligase_asu"/>
</dbReference>
<dbReference type="NCBIfam" id="TIGR00388">
    <property type="entry name" value="glyQ"/>
    <property type="match status" value="1"/>
</dbReference>
<dbReference type="NCBIfam" id="NF006827">
    <property type="entry name" value="PRK09348.1"/>
    <property type="match status" value="1"/>
</dbReference>
<dbReference type="PANTHER" id="PTHR30075:SF2">
    <property type="entry name" value="GLYCINE--TRNA LIGASE, CHLOROPLASTIC_MITOCHONDRIAL 2"/>
    <property type="match status" value="1"/>
</dbReference>
<dbReference type="PANTHER" id="PTHR30075">
    <property type="entry name" value="GLYCYL-TRNA SYNTHETASE"/>
    <property type="match status" value="1"/>
</dbReference>
<dbReference type="Pfam" id="PF02091">
    <property type="entry name" value="tRNA-synt_2e"/>
    <property type="match status" value="1"/>
</dbReference>
<dbReference type="PRINTS" id="PR01044">
    <property type="entry name" value="TRNASYNTHGA"/>
</dbReference>
<dbReference type="SUPFAM" id="SSF55681">
    <property type="entry name" value="Class II aaRS and biotin synthetases"/>
    <property type="match status" value="1"/>
</dbReference>
<dbReference type="PROSITE" id="PS50861">
    <property type="entry name" value="AA_TRNA_LIGASE_II_GLYAB"/>
    <property type="match status" value="1"/>
</dbReference>
<proteinExistence type="inferred from homology"/>
<organism>
    <name type="scientific">Citrobacter koseri (strain ATCC BAA-895 / CDC 4225-83 / SGSC4696)</name>
    <dbReference type="NCBI Taxonomy" id="290338"/>
    <lineage>
        <taxon>Bacteria</taxon>
        <taxon>Pseudomonadati</taxon>
        <taxon>Pseudomonadota</taxon>
        <taxon>Gammaproteobacteria</taxon>
        <taxon>Enterobacterales</taxon>
        <taxon>Enterobacteriaceae</taxon>
        <taxon>Citrobacter</taxon>
    </lineage>
</organism>